<dbReference type="EMBL" id="CP000270">
    <property type="protein sequence ID" value="ABE31941.1"/>
    <property type="molecule type" value="Genomic_DNA"/>
</dbReference>
<dbReference type="RefSeq" id="WP_007180912.1">
    <property type="nucleotide sequence ID" value="NZ_CP008760.1"/>
</dbReference>
<dbReference type="SMR" id="Q13VE8"/>
<dbReference type="STRING" id="266265.Bxe_A1006"/>
<dbReference type="GeneID" id="97307996"/>
<dbReference type="KEGG" id="bxb:DR64_3167"/>
<dbReference type="KEGG" id="bxe:Bxe_A1006"/>
<dbReference type="eggNOG" id="COG0228">
    <property type="taxonomic scope" value="Bacteria"/>
</dbReference>
<dbReference type="OrthoDB" id="9807878at2"/>
<dbReference type="Proteomes" id="UP000001817">
    <property type="component" value="Chromosome 1"/>
</dbReference>
<dbReference type="GO" id="GO:0005737">
    <property type="term" value="C:cytoplasm"/>
    <property type="evidence" value="ECO:0007669"/>
    <property type="project" value="UniProtKB-ARBA"/>
</dbReference>
<dbReference type="GO" id="GO:0015935">
    <property type="term" value="C:small ribosomal subunit"/>
    <property type="evidence" value="ECO:0007669"/>
    <property type="project" value="TreeGrafter"/>
</dbReference>
<dbReference type="GO" id="GO:0003735">
    <property type="term" value="F:structural constituent of ribosome"/>
    <property type="evidence" value="ECO:0007669"/>
    <property type="project" value="InterPro"/>
</dbReference>
<dbReference type="GO" id="GO:0006412">
    <property type="term" value="P:translation"/>
    <property type="evidence" value="ECO:0007669"/>
    <property type="project" value="UniProtKB-UniRule"/>
</dbReference>
<dbReference type="Gene3D" id="3.30.1320.10">
    <property type="match status" value="1"/>
</dbReference>
<dbReference type="HAMAP" id="MF_00385">
    <property type="entry name" value="Ribosomal_bS16"/>
    <property type="match status" value="1"/>
</dbReference>
<dbReference type="InterPro" id="IPR000307">
    <property type="entry name" value="Ribosomal_bS16"/>
</dbReference>
<dbReference type="InterPro" id="IPR023803">
    <property type="entry name" value="Ribosomal_bS16_dom_sf"/>
</dbReference>
<dbReference type="NCBIfam" id="TIGR00002">
    <property type="entry name" value="S16"/>
    <property type="match status" value="1"/>
</dbReference>
<dbReference type="PANTHER" id="PTHR12919">
    <property type="entry name" value="30S RIBOSOMAL PROTEIN S16"/>
    <property type="match status" value="1"/>
</dbReference>
<dbReference type="PANTHER" id="PTHR12919:SF20">
    <property type="entry name" value="SMALL RIBOSOMAL SUBUNIT PROTEIN BS16M"/>
    <property type="match status" value="1"/>
</dbReference>
<dbReference type="Pfam" id="PF00886">
    <property type="entry name" value="Ribosomal_S16"/>
    <property type="match status" value="1"/>
</dbReference>
<dbReference type="SUPFAM" id="SSF54565">
    <property type="entry name" value="Ribosomal protein S16"/>
    <property type="match status" value="1"/>
</dbReference>
<keyword id="KW-1185">Reference proteome</keyword>
<keyword id="KW-0687">Ribonucleoprotein</keyword>
<keyword id="KW-0689">Ribosomal protein</keyword>
<name>RS16_PARXL</name>
<gene>
    <name evidence="1" type="primary">rpsP</name>
    <name type="ordered locus">Bxeno_A3403</name>
    <name type="ORF">Bxe_A1006</name>
</gene>
<comment type="similarity">
    <text evidence="1">Belongs to the bacterial ribosomal protein bS16 family.</text>
</comment>
<proteinExistence type="inferred from homology"/>
<protein>
    <recommendedName>
        <fullName evidence="1">Small ribosomal subunit protein bS16</fullName>
    </recommendedName>
    <alternativeName>
        <fullName evidence="2">30S ribosomal protein S16</fullName>
    </alternativeName>
</protein>
<sequence>MVIIRLARGGSKKRPFYNIVATDSRNRRDGRFIERVGFYNPVATKGESLRIAQDRLTYWQGVGAQLSPTVERLVKEAAKAQPAA</sequence>
<feature type="chain" id="PRO_1000049231" description="Small ribosomal subunit protein bS16">
    <location>
        <begin position="1"/>
        <end position="84"/>
    </location>
</feature>
<evidence type="ECO:0000255" key="1">
    <source>
        <dbReference type="HAMAP-Rule" id="MF_00385"/>
    </source>
</evidence>
<evidence type="ECO:0000305" key="2"/>
<organism>
    <name type="scientific">Paraburkholderia xenovorans (strain LB400)</name>
    <dbReference type="NCBI Taxonomy" id="266265"/>
    <lineage>
        <taxon>Bacteria</taxon>
        <taxon>Pseudomonadati</taxon>
        <taxon>Pseudomonadota</taxon>
        <taxon>Betaproteobacteria</taxon>
        <taxon>Burkholderiales</taxon>
        <taxon>Burkholderiaceae</taxon>
        <taxon>Paraburkholderia</taxon>
    </lineage>
</organism>
<accession>Q13VE8</accession>
<reference key="1">
    <citation type="journal article" date="2006" name="Proc. Natl. Acad. Sci. U.S.A.">
        <title>Burkholderia xenovorans LB400 harbors a multi-replicon, 9.73-Mbp genome shaped for versatility.</title>
        <authorList>
            <person name="Chain P.S.G."/>
            <person name="Denef V.J."/>
            <person name="Konstantinidis K.T."/>
            <person name="Vergez L.M."/>
            <person name="Agullo L."/>
            <person name="Reyes V.L."/>
            <person name="Hauser L."/>
            <person name="Cordova M."/>
            <person name="Gomez L."/>
            <person name="Gonzalez M."/>
            <person name="Land M."/>
            <person name="Lao V."/>
            <person name="Larimer F."/>
            <person name="LiPuma J.J."/>
            <person name="Mahenthiralingam E."/>
            <person name="Malfatti S.A."/>
            <person name="Marx C.J."/>
            <person name="Parnell J.J."/>
            <person name="Ramette A."/>
            <person name="Richardson P."/>
            <person name="Seeger M."/>
            <person name="Smith D."/>
            <person name="Spilker T."/>
            <person name="Sul W.J."/>
            <person name="Tsoi T.V."/>
            <person name="Ulrich L.E."/>
            <person name="Zhulin I.B."/>
            <person name="Tiedje J.M."/>
        </authorList>
    </citation>
    <scope>NUCLEOTIDE SEQUENCE [LARGE SCALE GENOMIC DNA]</scope>
    <source>
        <strain>LB400</strain>
    </source>
</reference>